<gene>
    <name evidence="1" type="primary">nuoC</name>
    <name type="ordered locus">NGO_1749</name>
</gene>
<sequence>MASIQNLYETVVGVLGDQAGKVISALGEITVECLPEHYISVMTALHDHEDLHFELLVDLCGVDYSTYKNEAWQGKRFAVVSQLLSVKNNQRIRVRVWVSDDDFPVVESVADIYNSADWYEREAFDLYGIMFNNHPDLRRILTDYGFVGHPFRKDFPISGYVEMRYDEEQKRVIYQPVTIEPREITPRIVREENYGGQ</sequence>
<proteinExistence type="inferred from homology"/>
<feature type="chain" id="PRO_0000358144" description="NADH-quinone oxidoreductase subunit C">
    <location>
        <begin position="1"/>
        <end position="197"/>
    </location>
</feature>
<accession>Q5F617</accession>
<evidence type="ECO:0000255" key="1">
    <source>
        <dbReference type="HAMAP-Rule" id="MF_01357"/>
    </source>
</evidence>
<organism>
    <name type="scientific">Neisseria gonorrhoeae (strain ATCC 700825 / FA 1090)</name>
    <dbReference type="NCBI Taxonomy" id="242231"/>
    <lineage>
        <taxon>Bacteria</taxon>
        <taxon>Pseudomonadati</taxon>
        <taxon>Pseudomonadota</taxon>
        <taxon>Betaproteobacteria</taxon>
        <taxon>Neisseriales</taxon>
        <taxon>Neisseriaceae</taxon>
        <taxon>Neisseria</taxon>
    </lineage>
</organism>
<name>NUOC_NEIG1</name>
<protein>
    <recommendedName>
        <fullName evidence="1">NADH-quinone oxidoreductase subunit C</fullName>
        <ecNumber evidence="1">7.1.1.-</ecNumber>
    </recommendedName>
    <alternativeName>
        <fullName evidence="1">NADH dehydrogenase I subunit C</fullName>
    </alternativeName>
    <alternativeName>
        <fullName evidence="1">NDH-1 subunit C</fullName>
    </alternativeName>
</protein>
<comment type="function">
    <text evidence="1">NDH-1 shuttles electrons from NADH, via FMN and iron-sulfur (Fe-S) centers, to quinones in the respiratory chain. The immediate electron acceptor for the enzyme in this species is believed to be ubiquinone. Couples the redox reaction to proton translocation (for every two electrons transferred, four hydrogen ions are translocated across the cytoplasmic membrane), and thus conserves the redox energy in a proton gradient.</text>
</comment>
<comment type="catalytic activity">
    <reaction evidence="1">
        <text>a quinone + NADH + 5 H(+)(in) = a quinol + NAD(+) + 4 H(+)(out)</text>
        <dbReference type="Rhea" id="RHEA:57888"/>
        <dbReference type="ChEBI" id="CHEBI:15378"/>
        <dbReference type="ChEBI" id="CHEBI:24646"/>
        <dbReference type="ChEBI" id="CHEBI:57540"/>
        <dbReference type="ChEBI" id="CHEBI:57945"/>
        <dbReference type="ChEBI" id="CHEBI:132124"/>
    </reaction>
</comment>
<comment type="subunit">
    <text evidence="1">NDH-1 is composed of 14 different subunits. Subunits NuoB, C, D, E, F, and G constitute the peripheral sector of the complex.</text>
</comment>
<comment type="subcellular location">
    <subcellularLocation>
        <location evidence="1">Cell inner membrane</location>
        <topology evidence="1">Peripheral membrane protein</topology>
        <orientation evidence="1">Cytoplasmic side</orientation>
    </subcellularLocation>
</comment>
<comment type="similarity">
    <text evidence="1">Belongs to the complex I 30 kDa subunit family.</text>
</comment>
<keyword id="KW-0997">Cell inner membrane</keyword>
<keyword id="KW-1003">Cell membrane</keyword>
<keyword id="KW-0472">Membrane</keyword>
<keyword id="KW-0520">NAD</keyword>
<keyword id="KW-0874">Quinone</keyword>
<keyword id="KW-1185">Reference proteome</keyword>
<keyword id="KW-1278">Translocase</keyword>
<keyword id="KW-0813">Transport</keyword>
<keyword id="KW-0830">Ubiquinone</keyword>
<reference key="1">
    <citation type="submission" date="2003-03" db="EMBL/GenBank/DDBJ databases">
        <title>The complete genome sequence of Neisseria gonorrhoeae.</title>
        <authorList>
            <person name="Lewis L.A."/>
            <person name="Gillaspy A.F."/>
            <person name="McLaughlin R.E."/>
            <person name="Gipson M."/>
            <person name="Ducey T.F."/>
            <person name="Ownbey T."/>
            <person name="Hartman K."/>
            <person name="Nydick C."/>
            <person name="Carson M.B."/>
            <person name="Vaughn J."/>
            <person name="Thomson C."/>
            <person name="Song L."/>
            <person name="Lin S."/>
            <person name="Yuan X."/>
            <person name="Najar F."/>
            <person name="Zhan M."/>
            <person name="Ren Q."/>
            <person name="Zhu H."/>
            <person name="Qi S."/>
            <person name="Kenton S.M."/>
            <person name="Lai H."/>
            <person name="White J.D."/>
            <person name="Clifton S."/>
            <person name="Roe B.A."/>
            <person name="Dyer D.W."/>
        </authorList>
    </citation>
    <scope>NUCLEOTIDE SEQUENCE [LARGE SCALE GENOMIC DNA]</scope>
    <source>
        <strain>ATCC 700825 / FA 1090</strain>
    </source>
</reference>
<dbReference type="EC" id="7.1.1.-" evidence="1"/>
<dbReference type="EMBL" id="AE004969">
    <property type="protein sequence ID" value="AAW90370.1"/>
    <property type="molecule type" value="Genomic_DNA"/>
</dbReference>
<dbReference type="RefSeq" id="WP_003689952.1">
    <property type="nucleotide sequence ID" value="NC_002946.2"/>
</dbReference>
<dbReference type="RefSeq" id="YP_208782.1">
    <property type="nucleotide sequence ID" value="NC_002946.2"/>
</dbReference>
<dbReference type="SMR" id="Q5F617"/>
<dbReference type="STRING" id="242231.NGO_1749"/>
<dbReference type="KEGG" id="ngo:NGO_1749"/>
<dbReference type="PATRIC" id="fig|242231.10.peg.2090"/>
<dbReference type="HOGENOM" id="CLU_042628_2_1_4"/>
<dbReference type="Proteomes" id="UP000000535">
    <property type="component" value="Chromosome"/>
</dbReference>
<dbReference type="GO" id="GO:0005886">
    <property type="term" value="C:plasma membrane"/>
    <property type="evidence" value="ECO:0007669"/>
    <property type="project" value="UniProtKB-SubCell"/>
</dbReference>
<dbReference type="GO" id="GO:0008137">
    <property type="term" value="F:NADH dehydrogenase (ubiquinone) activity"/>
    <property type="evidence" value="ECO:0007669"/>
    <property type="project" value="InterPro"/>
</dbReference>
<dbReference type="GO" id="GO:0050136">
    <property type="term" value="F:NADH:ubiquinone reductase (non-electrogenic) activity"/>
    <property type="evidence" value="ECO:0007669"/>
    <property type="project" value="UniProtKB-UniRule"/>
</dbReference>
<dbReference type="GO" id="GO:0048038">
    <property type="term" value="F:quinone binding"/>
    <property type="evidence" value="ECO:0007669"/>
    <property type="project" value="UniProtKB-KW"/>
</dbReference>
<dbReference type="Gene3D" id="3.30.460.80">
    <property type="entry name" value="NADH:ubiquinone oxidoreductase, 30kDa subunit"/>
    <property type="match status" value="1"/>
</dbReference>
<dbReference type="HAMAP" id="MF_01357">
    <property type="entry name" value="NDH1_NuoC"/>
    <property type="match status" value="1"/>
</dbReference>
<dbReference type="InterPro" id="IPR010218">
    <property type="entry name" value="NADH_DH_suC"/>
</dbReference>
<dbReference type="InterPro" id="IPR037232">
    <property type="entry name" value="NADH_quin_OxRdtase_su_C/D-like"/>
</dbReference>
<dbReference type="InterPro" id="IPR001268">
    <property type="entry name" value="NADH_UbQ_OxRdtase_30kDa_su"/>
</dbReference>
<dbReference type="InterPro" id="IPR020396">
    <property type="entry name" value="NADH_UbQ_OxRdtase_CS"/>
</dbReference>
<dbReference type="NCBIfam" id="TIGR01961">
    <property type="entry name" value="NuoC_fam"/>
    <property type="match status" value="1"/>
</dbReference>
<dbReference type="NCBIfam" id="NF004730">
    <property type="entry name" value="PRK06074.1-1"/>
    <property type="match status" value="1"/>
</dbReference>
<dbReference type="PANTHER" id="PTHR10884:SF14">
    <property type="entry name" value="NADH DEHYDROGENASE [UBIQUINONE] IRON-SULFUR PROTEIN 3, MITOCHONDRIAL"/>
    <property type="match status" value="1"/>
</dbReference>
<dbReference type="PANTHER" id="PTHR10884">
    <property type="entry name" value="NADH DEHYDROGENASE UBIQUINONE IRON-SULFUR PROTEIN 3"/>
    <property type="match status" value="1"/>
</dbReference>
<dbReference type="Pfam" id="PF00329">
    <property type="entry name" value="Complex1_30kDa"/>
    <property type="match status" value="1"/>
</dbReference>
<dbReference type="SUPFAM" id="SSF143243">
    <property type="entry name" value="Nqo5-like"/>
    <property type="match status" value="1"/>
</dbReference>
<dbReference type="PROSITE" id="PS00542">
    <property type="entry name" value="COMPLEX1_30K"/>
    <property type="match status" value="1"/>
</dbReference>